<feature type="chain" id="PRO_0000086173" description="Protein kinase ORF15">
    <location>
        <begin position="1"/>
        <end position="380"/>
    </location>
</feature>
<feature type="domain" description="Protein kinase" evidence="1">
    <location>
        <begin position="93"/>
        <end position="371"/>
    </location>
</feature>
<feature type="active site" description="Proton acceptor" evidence="1 2">
    <location>
        <position position="217"/>
    </location>
</feature>
<feature type="binding site" evidence="1">
    <location>
        <position position="118"/>
    </location>
    <ligand>
        <name>ATP</name>
        <dbReference type="ChEBI" id="CHEBI:30616"/>
    </ligand>
</feature>
<reference key="1">
    <citation type="journal article" date="1992" name="Virology">
        <title>Channel catfish virus: a new type of herpesvirus.</title>
        <authorList>
            <person name="Davison A.J."/>
        </authorList>
    </citation>
    <scope>NUCLEOTIDE SEQUENCE [LARGE SCALE GENOMIC DNA]</scope>
    <source>
        <strain>Auburn 1</strain>
    </source>
</reference>
<name>KR15_ICHVA</name>
<organism>
    <name type="scientific">Ictalurid herpesvirus 1 (strain Auburn)</name>
    <name type="common">IcHV-1</name>
    <name type="synonym">Channel catfish herpesvirus</name>
    <dbReference type="NCBI Taxonomy" id="766178"/>
    <lineage>
        <taxon>Viruses</taxon>
        <taxon>Duplodnaviria</taxon>
        <taxon>Heunggongvirae</taxon>
        <taxon>Peploviricota</taxon>
        <taxon>Herviviricetes</taxon>
        <taxon>Herpesvirales</taxon>
        <taxon>Alloherpesviridae</taxon>
        <taxon>Ictavirus</taxon>
        <taxon>Ictavirus ictaluridallo1</taxon>
        <taxon>Ictalurid herpesvirus 1</taxon>
    </lineage>
</organism>
<sequence length="380" mass="42419">MAAVNWLKDEPYPEKPTRRNHLSFGPARLPTGDWDWIMTYYKPEAREWLRTMNNPLWSGPEDVLGLLPAGVPVTEKIFVKEVYPGLKGFLQMFIPVKVAGCLLFGFSPLSRTGMATLKTAPVFRGGYAPAAPGIPMQVYAWEMACKIDAAPRLFKWELIVGEYFVRLATLSECSAGGDVGAYIRGGRPISIEAAAVKTRELASTLYLLAQNNVYHGDVKIANTVITEPHGRLGLIDFEMAHPLDMTMSGLREGLEVPIKWDMVCTDEYRAPEGHGPFPDILSAEAQLVWQVGLFMLDVIGIEIIENRNQGLWEQPDFPGLAAREVGIGRSLLACEHRAFLDYLTIARGCLRTNPRERPRLTLLIAQLTKFIREVATQPEH</sequence>
<comment type="catalytic activity">
    <reaction>
        <text>L-seryl-[protein] + ATP = O-phospho-L-seryl-[protein] + ADP + H(+)</text>
        <dbReference type="Rhea" id="RHEA:17989"/>
        <dbReference type="Rhea" id="RHEA-COMP:9863"/>
        <dbReference type="Rhea" id="RHEA-COMP:11604"/>
        <dbReference type="ChEBI" id="CHEBI:15378"/>
        <dbReference type="ChEBI" id="CHEBI:29999"/>
        <dbReference type="ChEBI" id="CHEBI:30616"/>
        <dbReference type="ChEBI" id="CHEBI:83421"/>
        <dbReference type="ChEBI" id="CHEBI:456216"/>
        <dbReference type="EC" id="2.7.11.1"/>
    </reaction>
</comment>
<comment type="catalytic activity">
    <reaction>
        <text>L-threonyl-[protein] + ATP = O-phospho-L-threonyl-[protein] + ADP + H(+)</text>
        <dbReference type="Rhea" id="RHEA:46608"/>
        <dbReference type="Rhea" id="RHEA-COMP:11060"/>
        <dbReference type="Rhea" id="RHEA-COMP:11605"/>
        <dbReference type="ChEBI" id="CHEBI:15378"/>
        <dbReference type="ChEBI" id="CHEBI:30013"/>
        <dbReference type="ChEBI" id="CHEBI:30616"/>
        <dbReference type="ChEBI" id="CHEBI:61977"/>
        <dbReference type="ChEBI" id="CHEBI:456216"/>
        <dbReference type="EC" id="2.7.11.1"/>
    </reaction>
</comment>
<comment type="similarity">
    <text evidence="1">Belongs to the protein kinase superfamily. Ser/Thr protein kinase family.</text>
</comment>
<dbReference type="EC" id="2.7.11.1"/>
<dbReference type="EMBL" id="M75136">
    <property type="protein sequence ID" value="AAA88118.1"/>
    <property type="molecule type" value="Genomic_DNA"/>
</dbReference>
<dbReference type="PIR" id="G36787">
    <property type="entry name" value="TVBEI2"/>
</dbReference>
<dbReference type="RefSeq" id="NP_041106.1">
    <property type="nucleotide sequence ID" value="NC_001493.2"/>
</dbReference>
<dbReference type="GeneID" id="1488379"/>
<dbReference type="KEGG" id="vg:1488379"/>
<dbReference type="Proteomes" id="UP000007643">
    <property type="component" value="Segment"/>
</dbReference>
<dbReference type="GO" id="GO:0005524">
    <property type="term" value="F:ATP binding"/>
    <property type="evidence" value="ECO:0007669"/>
    <property type="project" value="UniProtKB-KW"/>
</dbReference>
<dbReference type="GO" id="GO:0106310">
    <property type="term" value="F:protein serine kinase activity"/>
    <property type="evidence" value="ECO:0007669"/>
    <property type="project" value="RHEA"/>
</dbReference>
<dbReference type="GO" id="GO:0004674">
    <property type="term" value="F:protein serine/threonine kinase activity"/>
    <property type="evidence" value="ECO:0007669"/>
    <property type="project" value="UniProtKB-KW"/>
</dbReference>
<dbReference type="Gene3D" id="1.10.510.10">
    <property type="entry name" value="Transferase(Phosphotransferase) domain 1"/>
    <property type="match status" value="1"/>
</dbReference>
<dbReference type="InterPro" id="IPR011009">
    <property type="entry name" value="Kinase-like_dom_sf"/>
</dbReference>
<dbReference type="InterPro" id="IPR000719">
    <property type="entry name" value="Prot_kinase_dom"/>
</dbReference>
<dbReference type="InterPro" id="IPR008271">
    <property type="entry name" value="Ser/Thr_kinase_AS"/>
</dbReference>
<dbReference type="Pfam" id="PF00069">
    <property type="entry name" value="Pkinase"/>
    <property type="match status" value="1"/>
</dbReference>
<dbReference type="SUPFAM" id="SSF56112">
    <property type="entry name" value="Protein kinase-like (PK-like)"/>
    <property type="match status" value="1"/>
</dbReference>
<dbReference type="PROSITE" id="PS50011">
    <property type="entry name" value="PROTEIN_KINASE_DOM"/>
    <property type="match status" value="1"/>
</dbReference>
<dbReference type="PROSITE" id="PS00108">
    <property type="entry name" value="PROTEIN_KINASE_ST"/>
    <property type="match status" value="1"/>
</dbReference>
<keyword id="KW-0067">ATP-binding</keyword>
<keyword id="KW-0418">Kinase</keyword>
<keyword id="KW-0547">Nucleotide-binding</keyword>
<keyword id="KW-1185">Reference proteome</keyword>
<keyword id="KW-0723">Serine/threonine-protein kinase</keyword>
<keyword id="KW-0808">Transferase</keyword>
<organismHost>
    <name type="scientific">Ictaluridae</name>
    <name type="common">bullhead catfishes</name>
    <dbReference type="NCBI Taxonomy" id="7996"/>
</organismHost>
<proteinExistence type="inferred from homology"/>
<evidence type="ECO:0000255" key="1">
    <source>
        <dbReference type="PROSITE-ProRule" id="PRU00159"/>
    </source>
</evidence>
<evidence type="ECO:0000255" key="2">
    <source>
        <dbReference type="PROSITE-ProRule" id="PRU10027"/>
    </source>
</evidence>
<gene>
    <name type="primary">ORF15</name>
</gene>
<protein>
    <recommendedName>
        <fullName>Protein kinase ORF15</fullName>
        <ecNumber>2.7.11.1</ecNumber>
    </recommendedName>
</protein>
<accession>Q00097</accession>